<sequence>MPTVNQLIRKPRTAPVKRNKVPALQANPQKRGVCTRVYTTTPKKPNSALRKVAKVRLTNGFEVIGYIPGEGHNLQEHSVVMIRGGRVKDLPGVRYHIIRGVLDTQGVKNRKQRRSKYGAKRPK</sequence>
<proteinExistence type="inferred from homology"/>
<keyword id="KW-0488">Methylation</keyword>
<keyword id="KW-0687">Ribonucleoprotein</keyword>
<keyword id="KW-0689">Ribosomal protein</keyword>
<keyword id="KW-0694">RNA-binding</keyword>
<keyword id="KW-0699">rRNA-binding</keyword>
<keyword id="KW-0820">tRNA-binding</keyword>
<organism>
    <name type="scientific">Brucella abortus (strain S19)</name>
    <dbReference type="NCBI Taxonomy" id="430066"/>
    <lineage>
        <taxon>Bacteria</taxon>
        <taxon>Pseudomonadati</taxon>
        <taxon>Pseudomonadota</taxon>
        <taxon>Alphaproteobacteria</taxon>
        <taxon>Hyphomicrobiales</taxon>
        <taxon>Brucellaceae</taxon>
        <taxon>Brucella/Ochrobactrum group</taxon>
        <taxon>Brucella</taxon>
    </lineage>
</organism>
<protein>
    <recommendedName>
        <fullName evidence="2">Small ribosomal subunit protein uS12</fullName>
    </recommendedName>
    <alternativeName>
        <fullName evidence="3">30S ribosomal protein S12</fullName>
    </alternativeName>
</protein>
<reference key="1">
    <citation type="journal article" date="2008" name="PLoS ONE">
        <title>Genome sequence of Brucella abortus vaccine strain S19 compared to virulent strains yields candidate virulence genes.</title>
        <authorList>
            <person name="Crasta O.R."/>
            <person name="Folkerts O."/>
            <person name="Fei Z."/>
            <person name="Mane S.P."/>
            <person name="Evans C."/>
            <person name="Martino-Catt S."/>
            <person name="Bricker B."/>
            <person name="Yu G."/>
            <person name="Du L."/>
            <person name="Sobral B.W."/>
        </authorList>
    </citation>
    <scope>NUCLEOTIDE SEQUENCE [LARGE SCALE GENOMIC DNA]</scope>
    <source>
        <strain>S19</strain>
    </source>
</reference>
<evidence type="ECO:0000250" key="1"/>
<evidence type="ECO:0000255" key="2">
    <source>
        <dbReference type="HAMAP-Rule" id="MF_00403"/>
    </source>
</evidence>
<evidence type="ECO:0000305" key="3"/>
<accession>B2S684</accession>
<comment type="function">
    <text evidence="2">With S4 and S5 plays an important role in translational accuracy.</text>
</comment>
<comment type="function">
    <text evidence="2">Interacts with and stabilizes bases of the 16S rRNA that are involved in tRNA selection in the A site and with the mRNA backbone. Located at the interface of the 30S and 50S subunits, it traverses the body of the 30S subunit contacting proteins on the other side and probably holding the rRNA structure together. The combined cluster of proteins S8, S12 and S17 appears to hold together the shoulder and platform of the 30S subunit.</text>
</comment>
<comment type="subunit">
    <text evidence="2">Part of the 30S ribosomal subunit. Contacts proteins S8 and S17. May interact with IF1 in the 30S initiation complex.</text>
</comment>
<comment type="similarity">
    <text evidence="2">Belongs to the universal ribosomal protein uS12 family.</text>
</comment>
<dbReference type="EMBL" id="CP000887">
    <property type="protein sequence ID" value="ACD72681.1"/>
    <property type="molecule type" value="Genomic_DNA"/>
</dbReference>
<dbReference type="RefSeq" id="WP_002964366.1">
    <property type="nucleotide sequence ID" value="NC_010742.1"/>
</dbReference>
<dbReference type="SMR" id="B2S684"/>
<dbReference type="GeneID" id="93016435"/>
<dbReference type="KEGG" id="bmc:BAbS19_I11760"/>
<dbReference type="HOGENOM" id="CLU_104295_1_2_5"/>
<dbReference type="Proteomes" id="UP000002565">
    <property type="component" value="Chromosome 1"/>
</dbReference>
<dbReference type="GO" id="GO:0015935">
    <property type="term" value="C:small ribosomal subunit"/>
    <property type="evidence" value="ECO:0007669"/>
    <property type="project" value="InterPro"/>
</dbReference>
<dbReference type="GO" id="GO:0019843">
    <property type="term" value="F:rRNA binding"/>
    <property type="evidence" value="ECO:0007669"/>
    <property type="project" value="UniProtKB-UniRule"/>
</dbReference>
<dbReference type="GO" id="GO:0003735">
    <property type="term" value="F:structural constituent of ribosome"/>
    <property type="evidence" value="ECO:0007669"/>
    <property type="project" value="InterPro"/>
</dbReference>
<dbReference type="GO" id="GO:0000049">
    <property type="term" value="F:tRNA binding"/>
    <property type="evidence" value="ECO:0007669"/>
    <property type="project" value="UniProtKB-UniRule"/>
</dbReference>
<dbReference type="GO" id="GO:0006412">
    <property type="term" value="P:translation"/>
    <property type="evidence" value="ECO:0007669"/>
    <property type="project" value="UniProtKB-UniRule"/>
</dbReference>
<dbReference type="CDD" id="cd03368">
    <property type="entry name" value="Ribosomal_S12"/>
    <property type="match status" value="1"/>
</dbReference>
<dbReference type="FunFam" id="2.40.50.140:FF:000001">
    <property type="entry name" value="30S ribosomal protein S12"/>
    <property type="match status" value="1"/>
</dbReference>
<dbReference type="Gene3D" id="2.40.50.140">
    <property type="entry name" value="Nucleic acid-binding proteins"/>
    <property type="match status" value="1"/>
</dbReference>
<dbReference type="HAMAP" id="MF_00403_B">
    <property type="entry name" value="Ribosomal_uS12_B"/>
    <property type="match status" value="1"/>
</dbReference>
<dbReference type="InterPro" id="IPR012340">
    <property type="entry name" value="NA-bd_OB-fold"/>
</dbReference>
<dbReference type="InterPro" id="IPR006032">
    <property type="entry name" value="Ribosomal_uS12"/>
</dbReference>
<dbReference type="InterPro" id="IPR005679">
    <property type="entry name" value="Ribosomal_uS12_bac"/>
</dbReference>
<dbReference type="NCBIfam" id="TIGR00981">
    <property type="entry name" value="rpsL_bact"/>
    <property type="match status" value="1"/>
</dbReference>
<dbReference type="PANTHER" id="PTHR11652">
    <property type="entry name" value="30S RIBOSOMAL PROTEIN S12 FAMILY MEMBER"/>
    <property type="match status" value="1"/>
</dbReference>
<dbReference type="Pfam" id="PF00164">
    <property type="entry name" value="Ribosom_S12_S23"/>
    <property type="match status" value="1"/>
</dbReference>
<dbReference type="PIRSF" id="PIRSF002133">
    <property type="entry name" value="Ribosomal_S12/S23"/>
    <property type="match status" value="1"/>
</dbReference>
<dbReference type="PRINTS" id="PR01034">
    <property type="entry name" value="RIBOSOMALS12"/>
</dbReference>
<dbReference type="SUPFAM" id="SSF50249">
    <property type="entry name" value="Nucleic acid-binding proteins"/>
    <property type="match status" value="1"/>
</dbReference>
<dbReference type="PROSITE" id="PS00055">
    <property type="entry name" value="RIBOSOMAL_S12"/>
    <property type="match status" value="1"/>
</dbReference>
<name>RS12_BRUA1</name>
<gene>
    <name evidence="2" type="primary">rpsL</name>
    <name type="ordered locus">BAbS19_I11760</name>
</gene>
<feature type="chain" id="PRO_1000194134" description="Small ribosomal subunit protein uS12">
    <location>
        <begin position="1"/>
        <end position="123"/>
    </location>
</feature>
<feature type="modified residue" description="3-methylthioaspartic acid" evidence="1">
    <location>
        <position position="89"/>
    </location>
</feature>